<dbReference type="EMBL" id="EU926028">
    <property type="protein sequence ID" value="ACI41360.1"/>
    <property type="molecule type" value="mRNA"/>
</dbReference>
<dbReference type="EMBL" id="FM864032">
    <property type="protein sequence ID" value="CAS03629.1"/>
    <property type="molecule type" value="mRNA"/>
</dbReference>
<dbReference type="SMR" id="B6DCU4"/>
<dbReference type="ArachnoServer" id="AS001741">
    <property type="toxin name" value="U3-lycotoxin-Ls1z"/>
</dbReference>
<dbReference type="GO" id="GO:0005576">
    <property type="term" value="C:extracellular region"/>
    <property type="evidence" value="ECO:0007669"/>
    <property type="project" value="UniProtKB-SubCell"/>
</dbReference>
<dbReference type="GO" id="GO:0090729">
    <property type="term" value="F:toxin activity"/>
    <property type="evidence" value="ECO:0007669"/>
    <property type="project" value="UniProtKB-KW"/>
</dbReference>
<dbReference type="InterPro" id="IPR019553">
    <property type="entry name" value="Spider_toxin_CSTX_knottin"/>
</dbReference>
<dbReference type="InterPro" id="IPR011142">
    <property type="entry name" value="Spider_toxin_CSTX_Knottin_CS"/>
</dbReference>
<dbReference type="Pfam" id="PF10530">
    <property type="entry name" value="Toxin_35"/>
    <property type="match status" value="1"/>
</dbReference>
<dbReference type="PROSITE" id="PS60029">
    <property type="entry name" value="SPIDER_CSTX"/>
    <property type="match status" value="1"/>
</dbReference>
<reference key="1">
    <citation type="journal article" date="2010" name="Zoology">
        <title>Transcriptome analysis of the venom glands of the Chinese wolf spider Lycosa singoriensis.</title>
        <authorList>
            <person name="Zhang Y."/>
            <person name="Chen J."/>
            <person name="Tang X."/>
            <person name="Wang F."/>
            <person name="Jiang L."/>
            <person name="Xiong X."/>
            <person name="Wang M."/>
            <person name="Rong M."/>
            <person name="Liu Z."/>
            <person name="Liang S."/>
        </authorList>
    </citation>
    <scope>NUCLEOTIDE SEQUENCE [LARGE SCALE MRNA]</scope>
    <source>
        <tissue>Venom gland</tissue>
    </source>
</reference>
<name>TXZ05_LYCSI</name>
<organism>
    <name type="scientific">Lycosa singoriensis</name>
    <name type="common">Wolf spider</name>
    <name type="synonym">Aranea singoriensis</name>
    <dbReference type="NCBI Taxonomy" id="434756"/>
    <lineage>
        <taxon>Eukaryota</taxon>
        <taxon>Metazoa</taxon>
        <taxon>Ecdysozoa</taxon>
        <taxon>Arthropoda</taxon>
        <taxon>Chelicerata</taxon>
        <taxon>Arachnida</taxon>
        <taxon>Araneae</taxon>
        <taxon>Araneomorphae</taxon>
        <taxon>Entelegynae</taxon>
        <taxon>Lycosoidea</taxon>
        <taxon>Lycosidae</taxon>
        <taxon>Lycosa</taxon>
    </lineage>
</organism>
<keyword id="KW-1015">Disulfide bond</keyword>
<keyword id="KW-0960">Knottin</keyword>
<keyword id="KW-0964">Secreted</keyword>
<keyword id="KW-0732">Signal</keyword>
<keyword id="KW-0800">Toxin</keyword>
<protein>
    <recommendedName>
        <fullName>Toxin-like structure LSTX-D5</fullName>
    </recommendedName>
</protein>
<feature type="signal peptide" evidence="2">
    <location>
        <begin position="1"/>
        <end position="20"/>
    </location>
</feature>
<feature type="propeptide" id="PRO_0000401701" evidence="1">
    <location>
        <begin position="21"/>
        <end position="41"/>
    </location>
</feature>
<feature type="chain" id="PRO_0000401702" description="Toxin-like structure LSTX-D5">
    <location>
        <begin position="42"/>
        <end position="106"/>
    </location>
</feature>
<feature type="disulfide bond" evidence="1">
    <location>
        <begin position="45"/>
        <end position="60"/>
    </location>
</feature>
<feature type="disulfide bond" evidence="1">
    <location>
        <begin position="52"/>
        <end position="69"/>
    </location>
</feature>
<feature type="disulfide bond" evidence="1">
    <location>
        <begin position="59"/>
        <end position="85"/>
    </location>
</feature>
<feature type="disulfide bond" evidence="1">
    <location>
        <begin position="71"/>
        <end position="83"/>
    </location>
</feature>
<proteinExistence type="evidence at transcript level"/>
<comment type="subcellular location">
    <subcellularLocation>
        <location evidence="1">Secreted</location>
    </subcellularLocation>
</comment>
<comment type="tissue specificity">
    <text>Expressed by the venom gland.</text>
</comment>
<comment type="domain">
    <text evidence="1">The presence of a 'disulfide through disulfide knot' structurally defines this protein as a knottin.</text>
</comment>
<comment type="similarity">
    <text evidence="3">Belongs to the neurotoxin 19 (CSTX) family. 02 (D7) subfamily.</text>
</comment>
<evidence type="ECO:0000250" key="1"/>
<evidence type="ECO:0000255" key="2"/>
<evidence type="ECO:0000305" key="3"/>
<accession>B6DCU4</accession>
<sequence length="106" mass="12029">MMKVLVVVALLVTLISYSSSEGIDDLETDELLSLMANEQTRAKACTPRYYDCSHDRHSCCRSSMFKDVCTCFYPEGGDNKEVCTCQQPKHLKYMEKATDKIKNLFG</sequence>